<protein>
    <recommendedName>
        <fullName evidence="1">Hydroxyacylglutathione hydrolase</fullName>
        <ecNumber evidence="1">3.1.2.6</ecNumber>
    </recommendedName>
    <alternativeName>
        <fullName evidence="1">Glyoxalase II</fullName>
        <shortName evidence="1">Glx II</shortName>
    </alternativeName>
</protein>
<keyword id="KW-0378">Hydrolase</keyword>
<keyword id="KW-0479">Metal-binding</keyword>
<keyword id="KW-1185">Reference proteome</keyword>
<keyword id="KW-0862">Zinc</keyword>
<feature type="chain" id="PRO_0000192350" description="Hydroxyacylglutathione hydrolase">
    <location>
        <begin position="1"/>
        <end position="249"/>
    </location>
</feature>
<feature type="binding site" evidence="1">
    <location>
        <position position="53"/>
    </location>
    <ligand>
        <name>Zn(2+)</name>
        <dbReference type="ChEBI" id="CHEBI:29105"/>
        <label>1</label>
    </ligand>
</feature>
<feature type="binding site" evidence="1">
    <location>
        <position position="55"/>
    </location>
    <ligand>
        <name>Zn(2+)</name>
        <dbReference type="ChEBI" id="CHEBI:29105"/>
        <label>1</label>
    </ligand>
</feature>
<feature type="binding site" evidence="1">
    <location>
        <position position="57"/>
    </location>
    <ligand>
        <name>Zn(2+)</name>
        <dbReference type="ChEBI" id="CHEBI:29105"/>
        <label>2</label>
    </ligand>
</feature>
<feature type="binding site" evidence="1">
    <location>
        <position position="58"/>
    </location>
    <ligand>
        <name>Zn(2+)</name>
        <dbReference type="ChEBI" id="CHEBI:29105"/>
        <label>2</label>
    </ligand>
</feature>
<feature type="binding site" evidence="1">
    <location>
        <position position="110"/>
    </location>
    <ligand>
        <name>Zn(2+)</name>
        <dbReference type="ChEBI" id="CHEBI:29105"/>
        <label>1</label>
    </ligand>
</feature>
<feature type="binding site" evidence="1">
    <location>
        <position position="127"/>
    </location>
    <ligand>
        <name>Zn(2+)</name>
        <dbReference type="ChEBI" id="CHEBI:29105"/>
        <label>1</label>
    </ligand>
</feature>
<feature type="binding site" evidence="1">
    <location>
        <position position="127"/>
    </location>
    <ligand>
        <name>Zn(2+)</name>
        <dbReference type="ChEBI" id="CHEBI:29105"/>
        <label>2</label>
    </ligand>
</feature>
<feature type="binding site" evidence="1">
    <location>
        <position position="165"/>
    </location>
    <ligand>
        <name>Zn(2+)</name>
        <dbReference type="ChEBI" id="CHEBI:29105"/>
        <label>2</label>
    </ligand>
</feature>
<evidence type="ECO:0000255" key="1">
    <source>
        <dbReference type="HAMAP-Rule" id="MF_01374"/>
    </source>
</evidence>
<sequence length="249" mass="29002">MKIIFTKVLFDNYVWIMFNSSKDCIIIDPGESNSVIKKIKKLNLNPKIILLTHNHLDHIQGVKNLLYKYPEISIYGPLETQFCGTKNLIDNRNTIEILNTKFYIIPTPGHTNGHTAYYCPPFLFCGDSIFSGGCGRVKNGMMIKMYNSLRTISKLPNDTLIYCSHEYTRSNLEFFKKIFPKNLNILNYYNNIKKSKTQCTLPSTLKIEKKINPFLQLNNTNLRHQVKIHNDLSFSLNFFIYLRKIKDKS</sequence>
<name>GLO2_BUCBP</name>
<organism>
    <name type="scientific">Buchnera aphidicola subsp. Baizongia pistaciae (strain Bp)</name>
    <dbReference type="NCBI Taxonomy" id="224915"/>
    <lineage>
        <taxon>Bacteria</taxon>
        <taxon>Pseudomonadati</taxon>
        <taxon>Pseudomonadota</taxon>
        <taxon>Gammaproteobacteria</taxon>
        <taxon>Enterobacterales</taxon>
        <taxon>Erwiniaceae</taxon>
        <taxon>Buchnera</taxon>
    </lineage>
</organism>
<accession>Q89AN4</accession>
<comment type="function">
    <text evidence="1">Thiolesterase that catalyzes the hydrolysis of S-D-lactoyl-glutathione to form glutathione and D-lactic acid.</text>
</comment>
<comment type="catalytic activity">
    <reaction evidence="1">
        <text>an S-(2-hydroxyacyl)glutathione + H2O = a 2-hydroxy carboxylate + glutathione + H(+)</text>
        <dbReference type="Rhea" id="RHEA:21864"/>
        <dbReference type="ChEBI" id="CHEBI:15377"/>
        <dbReference type="ChEBI" id="CHEBI:15378"/>
        <dbReference type="ChEBI" id="CHEBI:57925"/>
        <dbReference type="ChEBI" id="CHEBI:58896"/>
        <dbReference type="ChEBI" id="CHEBI:71261"/>
        <dbReference type="EC" id="3.1.2.6"/>
    </reaction>
</comment>
<comment type="cofactor">
    <cofactor evidence="1">
        <name>Zn(2+)</name>
        <dbReference type="ChEBI" id="CHEBI:29105"/>
    </cofactor>
    <text evidence="1">Binds 2 Zn(2+) ions per subunit.</text>
</comment>
<comment type="pathway">
    <text evidence="1">Secondary metabolite metabolism; methylglyoxal degradation; (R)-lactate from methylglyoxal: step 2/2.</text>
</comment>
<comment type="subunit">
    <text evidence="1">Monomer.</text>
</comment>
<comment type="similarity">
    <text evidence="1">Belongs to the metallo-beta-lactamase superfamily. Glyoxalase II family.</text>
</comment>
<reference key="1">
    <citation type="journal article" date="2003" name="Proc. Natl. Acad. Sci. U.S.A.">
        <title>Reductive genome evolution in Buchnera aphidicola.</title>
        <authorList>
            <person name="van Ham R.C.H.J."/>
            <person name="Kamerbeek J."/>
            <person name="Palacios C."/>
            <person name="Rausell C."/>
            <person name="Abascal F."/>
            <person name="Bastolla U."/>
            <person name="Fernandez J.M."/>
            <person name="Jimenez L."/>
            <person name="Postigo M."/>
            <person name="Silva F.J."/>
            <person name="Tamames J."/>
            <person name="Viguera E."/>
            <person name="Latorre A."/>
            <person name="Valencia A."/>
            <person name="Moran F."/>
            <person name="Moya A."/>
        </authorList>
    </citation>
    <scope>NUCLEOTIDE SEQUENCE [LARGE SCALE GENOMIC DNA]</scope>
    <source>
        <strain>Bp</strain>
    </source>
</reference>
<gene>
    <name evidence="1" type="primary">gloB</name>
    <name type="ordered locus">bbp_228</name>
</gene>
<proteinExistence type="inferred from homology"/>
<dbReference type="EC" id="3.1.2.6" evidence="1"/>
<dbReference type="EMBL" id="AE016826">
    <property type="protein sequence ID" value="AAO26956.1"/>
    <property type="molecule type" value="Genomic_DNA"/>
</dbReference>
<dbReference type="RefSeq" id="WP_011091357.1">
    <property type="nucleotide sequence ID" value="NC_004545.1"/>
</dbReference>
<dbReference type="SMR" id="Q89AN4"/>
<dbReference type="STRING" id="224915.bbp_228"/>
<dbReference type="KEGG" id="bab:bbp_228"/>
<dbReference type="eggNOG" id="COG0491">
    <property type="taxonomic scope" value="Bacteria"/>
</dbReference>
<dbReference type="HOGENOM" id="CLU_030571_4_1_6"/>
<dbReference type="OrthoDB" id="9802248at2"/>
<dbReference type="UniPathway" id="UPA00619">
    <property type="reaction ID" value="UER00676"/>
</dbReference>
<dbReference type="Proteomes" id="UP000000601">
    <property type="component" value="Chromosome"/>
</dbReference>
<dbReference type="GO" id="GO:0004416">
    <property type="term" value="F:hydroxyacylglutathione hydrolase activity"/>
    <property type="evidence" value="ECO:0007669"/>
    <property type="project" value="UniProtKB-UniRule"/>
</dbReference>
<dbReference type="GO" id="GO:0046872">
    <property type="term" value="F:metal ion binding"/>
    <property type="evidence" value="ECO:0007669"/>
    <property type="project" value="UniProtKB-KW"/>
</dbReference>
<dbReference type="GO" id="GO:0019243">
    <property type="term" value="P:methylglyoxal catabolic process to D-lactate via S-lactoyl-glutathione"/>
    <property type="evidence" value="ECO:0007669"/>
    <property type="project" value="InterPro"/>
</dbReference>
<dbReference type="CDD" id="cd07723">
    <property type="entry name" value="hydroxyacylglutathione_hydrolase_MBL-fold"/>
    <property type="match status" value="1"/>
</dbReference>
<dbReference type="Gene3D" id="3.60.15.10">
    <property type="entry name" value="Ribonuclease Z/Hydroxyacylglutathione hydrolase-like"/>
    <property type="match status" value="1"/>
</dbReference>
<dbReference type="HAMAP" id="MF_01374">
    <property type="entry name" value="Glyoxalase_2"/>
    <property type="match status" value="1"/>
</dbReference>
<dbReference type="InterPro" id="IPR035680">
    <property type="entry name" value="Clx_II_MBL"/>
</dbReference>
<dbReference type="InterPro" id="IPR050110">
    <property type="entry name" value="Glyoxalase_II_hydrolase"/>
</dbReference>
<dbReference type="InterPro" id="IPR032282">
    <property type="entry name" value="HAGH_C"/>
</dbReference>
<dbReference type="InterPro" id="IPR017782">
    <property type="entry name" value="Hydroxyacylglutathione_Hdrlase"/>
</dbReference>
<dbReference type="InterPro" id="IPR001279">
    <property type="entry name" value="Metallo-B-lactamas"/>
</dbReference>
<dbReference type="InterPro" id="IPR036866">
    <property type="entry name" value="RibonucZ/Hydroxyglut_hydro"/>
</dbReference>
<dbReference type="NCBIfam" id="TIGR03413">
    <property type="entry name" value="GSH_gloB"/>
    <property type="match status" value="1"/>
</dbReference>
<dbReference type="PANTHER" id="PTHR43705">
    <property type="entry name" value="HYDROXYACYLGLUTATHIONE HYDROLASE"/>
    <property type="match status" value="1"/>
</dbReference>
<dbReference type="PANTHER" id="PTHR43705:SF1">
    <property type="entry name" value="HYDROXYACYLGLUTATHIONE HYDROLASE GLOB"/>
    <property type="match status" value="1"/>
</dbReference>
<dbReference type="Pfam" id="PF16123">
    <property type="entry name" value="HAGH_C"/>
    <property type="match status" value="1"/>
</dbReference>
<dbReference type="Pfam" id="PF00753">
    <property type="entry name" value="Lactamase_B"/>
    <property type="match status" value="1"/>
</dbReference>
<dbReference type="SMART" id="SM00849">
    <property type="entry name" value="Lactamase_B"/>
    <property type="match status" value="1"/>
</dbReference>
<dbReference type="SUPFAM" id="SSF56281">
    <property type="entry name" value="Metallo-hydrolase/oxidoreductase"/>
    <property type="match status" value="1"/>
</dbReference>